<dbReference type="EC" id="1.1.1.290" evidence="1"/>
<dbReference type="EMBL" id="AE016828">
    <property type="protein sequence ID" value="AAO91305.1"/>
    <property type="status" value="ALT_INIT"/>
    <property type="molecule type" value="Genomic_DNA"/>
</dbReference>
<dbReference type="RefSeq" id="NP_820791.1">
    <property type="nucleotide sequence ID" value="NC_002971.3"/>
</dbReference>
<dbReference type="RefSeq" id="WP_010958459.1">
    <property type="nucleotide sequence ID" value="NC_002971.4"/>
</dbReference>
<dbReference type="SMR" id="Q83AR8"/>
<dbReference type="STRING" id="227377.CBU_1812"/>
<dbReference type="EnsemblBacteria" id="AAO91305">
    <property type="protein sequence ID" value="AAO91305"/>
    <property type="gene ID" value="CBU_1812"/>
</dbReference>
<dbReference type="GeneID" id="1209723"/>
<dbReference type="KEGG" id="cbu:CBU_1812"/>
<dbReference type="PATRIC" id="fig|227377.7.peg.1798"/>
<dbReference type="eggNOG" id="COG0111">
    <property type="taxonomic scope" value="Bacteria"/>
</dbReference>
<dbReference type="HOGENOM" id="CLU_019796_4_0_6"/>
<dbReference type="OrthoDB" id="9770208at2"/>
<dbReference type="UniPathway" id="UPA00244">
    <property type="reaction ID" value="UER00310"/>
</dbReference>
<dbReference type="Proteomes" id="UP000002671">
    <property type="component" value="Chromosome"/>
</dbReference>
<dbReference type="GO" id="GO:0005829">
    <property type="term" value="C:cytosol"/>
    <property type="evidence" value="ECO:0000318"/>
    <property type="project" value="GO_Central"/>
</dbReference>
<dbReference type="GO" id="GO:0033711">
    <property type="term" value="F:4-phosphoerythronate dehydrogenase activity"/>
    <property type="evidence" value="ECO:0000318"/>
    <property type="project" value="GO_Central"/>
</dbReference>
<dbReference type="GO" id="GO:0051287">
    <property type="term" value="F:NAD binding"/>
    <property type="evidence" value="ECO:0007669"/>
    <property type="project" value="InterPro"/>
</dbReference>
<dbReference type="GO" id="GO:0046983">
    <property type="term" value="F:protein dimerization activity"/>
    <property type="evidence" value="ECO:0007669"/>
    <property type="project" value="InterPro"/>
</dbReference>
<dbReference type="GO" id="GO:0036001">
    <property type="term" value="P:'de novo' pyridoxal 5'-phosphate biosynthetic process"/>
    <property type="evidence" value="ECO:0000318"/>
    <property type="project" value="GO_Central"/>
</dbReference>
<dbReference type="GO" id="GO:0008615">
    <property type="term" value="P:pyridoxine biosynthetic process"/>
    <property type="evidence" value="ECO:0000318"/>
    <property type="project" value="GO_Central"/>
</dbReference>
<dbReference type="CDD" id="cd12158">
    <property type="entry name" value="ErythrP_dh"/>
    <property type="match status" value="1"/>
</dbReference>
<dbReference type="Gene3D" id="3.30.1370.170">
    <property type="match status" value="1"/>
</dbReference>
<dbReference type="Gene3D" id="3.40.50.720">
    <property type="entry name" value="NAD(P)-binding Rossmann-like Domain"/>
    <property type="match status" value="2"/>
</dbReference>
<dbReference type="HAMAP" id="MF_01825">
    <property type="entry name" value="PdxB"/>
    <property type="match status" value="1"/>
</dbReference>
<dbReference type="InterPro" id="IPR050223">
    <property type="entry name" value="D-isomer_2-hydroxyacid_DH"/>
</dbReference>
<dbReference type="InterPro" id="IPR006139">
    <property type="entry name" value="D-isomer_2_OHA_DH_cat_dom"/>
</dbReference>
<dbReference type="InterPro" id="IPR029753">
    <property type="entry name" value="D-isomer_DH_CS"/>
</dbReference>
<dbReference type="InterPro" id="IPR006140">
    <property type="entry name" value="D-isomer_DH_NAD-bd"/>
</dbReference>
<dbReference type="InterPro" id="IPR020921">
    <property type="entry name" value="Erythronate-4-P_DHase"/>
</dbReference>
<dbReference type="InterPro" id="IPR024531">
    <property type="entry name" value="Erythronate-4-P_DHase_dimer"/>
</dbReference>
<dbReference type="InterPro" id="IPR036291">
    <property type="entry name" value="NAD(P)-bd_dom_sf"/>
</dbReference>
<dbReference type="InterPro" id="IPR038251">
    <property type="entry name" value="PdxB_dimer_sf"/>
</dbReference>
<dbReference type="PANTHER" id="PTHR10996:SF178">
    <property type="entry name" value="2-HYDROXYACID DEHYDROGENASE YGL185C-RELATED"/>
    <property type="match status" value="1"/>
</dbReference>
<dbReference type="PANTHER" id="PTHR10996">
    <property type="entry name" value="2-HYDROXYACID DEHYDROGENASE-RELATED"/>
    <property type="match status" value="1"/>
</dbReference>
<dbReference type="Pfam" id="PF00389">
    <property type="entry name" value="2-Hacid_dh"/>
    <property type="match status" value="1"/>
</dbReference>
<dbReference type="Pfam" id="PF02826">
    <property type="entry name" value="2-Hacid_dh_C"/>
    <property type="match status" value="1"/>
</dbReference>
<dbReference type="Pfam" id="PF11890">
    <property type="entry name" value="DUF3410"/>
    <property type="match status" value="1"/>
</dbReference>
<dbReference type="SUPFAM" id="SSF52283">
    <property type="entry name" value="Formate/glycerate dehydrogenase catalytic domain-like"/>
    <property type="match status" value="1"/>
</dbReference>
<dbReference type="SUPFAM" id="SSF51735">
    <property type="entry name" value="NAD(P)-binding Rossmann-fold domains"/>
    <property type="match status" value="1"/>
</dbReference>
<dbReference type="PROSITE" id="PS00671">
    <property type="entry name" value="D_2_HYDROXYACID_DH_3"/>
    <property type="match status" value="1"/>
</dbReference>
<sequence>MIKILADDRIPFVSELFGDFGELILKPGAHIQNRDLLAVNALLTRSITSVDSALLEGTAVEFVGSATAGFDHIDSTWLKKQSIHWAYAPGANATAVAEYVLHCVAYLHKKNLLPRKSATAAIIGVGHVGCVVSDRLRKIGFTVFHNDPPRAQLEKDFISVPLASLANVDLVCLHTPLVKTGNFPTYHLIDNRFLKMLKPGSVLLNAGRGAVIDNNALLQCDHVITCLDVWENEPTVNLQLLEKTTIATPHIAGYSKQAKLRATLMIYDAFLKYFHLSDTRRFSELQQLQETMTLNIQDGRNAEDILLTLFDPGRESQRMRETLAENPDQFEYLRRHFPLRNEFSAIQLTPTPSALLRKELDDWGFK</sequence>
<feature type="chain" id="PRO_0000075974" description="Erythronate-4-phosphate dehydrogenase">
    <location>
        <begin position="1"/>
        <end position="366"/>
    </location>
</feature>
<feature type="active site" evidence="1">
    <location>
        <position position="208"/>
    </location>
</feature>
<feature type="active site" evidence="1">
    <location>
        <position position="233"/>
    </location>
</feature>
<feature type="active site" description="Proton donor" evidence="1">
    <location>
        <position position="250"/>
    </location>
</feature>
<feature type="binding site" evidence="1">
    <location>
        <position position="46"/>
    </location>
    <ligand>
        <name>substrate</name>
    </ligand>
</feature>
<feature type="binding site" evidence="1">
    <location>
        <position position="67"/>
    </location>
    <ligand>
        <name>substrate</name>
    </ligand>
</feature>
<feature type="binding site" evidence="1">
    <location>
        <position position="147"/>
    </location>
    <ligand>
        <name>NAD(+)</name>
        <dbReference type="ChEBI" id="CHEBI:57540"/>
    </ligand>
</feature>
<feature type="binding site" evidence="1">
    <location>
        <position position="175"/>
    </location>
    <ligand>
        <name>NAD(+)</name>
        <dbReference type="ChEBI" id="CHEBI:57540"/>
    </ligand>
</feature>
<feature type="binding site" evidence="1">
    <location>
        <position position="228"/>
    </location>
    <ligand>
        <name>NAD(+)</name>
        <dbReference type="ChEBI" id="CHEBI:57540"/>
    </ligand>
</feature>
<feature type="binding site" evidence="1">
    <location>
        <position position="253"/>
    </location>
    <ligand>
        <name>NAD(+)</name>
        <dbReference type="ChEBI" id="CHEBI:57540"/>
    </ligand>
</feature>
<feature type="binding site" evidence="1">
    <location>
        <position position="254"/>
    </location>
    <ligand>
        <name>substrate</name>
    </ligand>
</feature>
<keyword id="KW-0963">Cytoplasm</keyword>
<keyword id="KW-0520">NAD</keyword>
<keyword id="KW-0560">Oxidoreductase</keyword>
<keyword id="KW-0664">Pyridoxine biosynthesis</keyword>
<keyword id="KW-1185">Reference proteome</keyword>
<comment type="function">
    <text evidence="1">Catalyzes the oxidation of erythronate-4-phosphate to 3-hydroxy-2-oxo-4-phosphonooxybutanoate.</text>
</comment>
<comment type="catalytic activity">
    <reaction evidence="1">
        <text>4-phospho-D-erythronate + NAD(+) = (R)-3-hydroxy-2-oxo-4-phosphooxybutanoate + NADH + H(+)</text>
        <dbReference type="Rhea" id="RHEA:18829"/>
        <dbReference type="ChEBI" id="CHEBI:15378"/>
        <dbReference type="ChEBI" id="CHEBI:57540"/>
        <dbReference type="ChEBI" id="CHEBI:57945"/>
        <dbReference type="ChEBI" id="CHEBI:58538"/>
        <dbReference type="ChEBI" id="CHEBI:58766"/>
        <dbReference type="EC" id="1.1.1.290"/>
    </reaction>
</comment>
<comment type="pathway">
    <text evidence="1">Cofactor biosynthesis; pyridoxine 5'-phosphate biosynthesis; pyridoxine 5'-phosphate from D-erythrose 4-phosphate: step 2/5.</text>
</comment>
<comment type="subunit">
    <text evidence="1">Homodimer.</text>
</comment>
<comment type="subcellular location">
    <subcellularLocation>
        <location evidence="1">Cytoplasm</location>
    </subcellularLocation>
</comment>
<comment type="similarity">
    <text evidence="1">Belongs to the D-isomer specific 2-hydroxyacid dehydrogenase family. PdxB subfamily.</text>
</comment>
<comment type="sequence caution" evidence="2">
    <conflict type="erroneous initiation">
        <sequence resource="EMBL-CDS" id="AAO91305"/>
    </conflict>
</comment>
<accession>Q83AR8</accession>
<gene>
    <name evidence="1" type="primary">pdxB</name>
    <name type="ordered locus">CBU_1812</name>
</gene>
<evidence type="ECO:0000255" key="1">
    <source>
        <dbReference type="HAMAP-Rule" id="MF_01825"/>
    </source>
</evidence>
<evidence type="ECO:0000305" key="2"/>
<organism>
    <name type="scientific">Coxiella burnetii (strain RSA 493 / Nine Mile phase I)</name>
    <dbReference type="NCBI Taxonomy" id="227377"/>
    <lineage>
        <taxon>Bacteria</taxon>
        <taxon>Pseudomonadati</taxon>
        <taxon>Pseudomonadota</taxon>
        <taxon>Gammaproteobacteria</taxon>
        <taxon>Legionellales</taxon>
        <taxon>Coxiellaceae</taxon>
        <taxon>Coxiella</taxon>
    </lineage>
</organism>
<reference key="1">
    <citation type="journal article" date="2003" name="Proc. Natl. Acad. Sci. U.S.A.">
        <title>Complete genome sequence of the Q-fever pathogen, Coxiella burnetii.</title>
        <authorList>
            <person name="Seshadri R."/>
            <person name="Paulsen I.T."/>
            <person name="Eisen J.A."/>
            <person name="Read T.D."/>
            <person name="Nelson K.E."/>
            <person name="Nelson W.C."/>
            <person name="Ward N.L."/>
            <person name="Tettelin H."/>
            <person name="Davidsen T.M."/>
            <person name="Beanan M.J."/>
            <person name="DeBoy R.T."/>
            <person name="Daugherty S.C."/>
            <person name="Brinkac L.M."/>
            <person name="Madupu R."/>
            <person name="Dodson R.J."/>
            <person name="Khouri H.M."/>
            <person name="Lee K.H."/>
            <person name="Carty H.A."/>
            <person name="Scanlan D."/>
            <person name="Heinzen R.A."/>
            <person name="Thompson H.A."/>
            <person name="Samuel J.E."/>
            <person name="Fraser C.M."/>
            <person name="Heidelberg J.F."/>
        </authorList>
    </citation>
    <scope>NUCLEOTIDE SEQUENCE [LARGE SCALE GENOMIC DNA]</scope>
    <source>
        <strain>RSA 493 / Nine Mile phase I</strain>
    </source>
</reference>
<name>PDXB_COXBU</name>
<protein>
    <recommendedName>
        <fullName evidence="1">Erythronate-4-phosphate dehydrogenase</fullName>
        <ecNumber evidence="1">1.1.1.290</ecNumber>
    </recommendedName>
</protein>
<proteinExistence type="inferred from homology"/>